<organism>
    <name type="scientific">Escherichia coli (strain K12 / DH10B)</name>
    <dbReference type="NCBI Taxonomy" id="316385"/>
    <lineage>
        <taxon>Bacteria</taxon>
        <taxon>Pseudomonadati</taxon>
        <taxon>Pseudomonadota</taxon>
        <taxon>Gammaproteobacteria</taxon>
        <taxon>Enterobacterales</taxon>
        <taxon>Enterobacteriaceae</taxon>
        <taxon>Escherichia</taxon>
    </lineage>
</organism>
<dbReference type="EC" id="3.1.13.1" evidence="2"/>
<dbReference type="EMBL" id="CP000948">
    <property type="protein sequence ID" value="ACB02507.1"/>
    <property type="molecule type" value="Genomic_DNA"/>
</dbReference>
<dbReference type="RefSeq" id="WP_000484984.1">
    <property type="nucleotide sequence ID" value="NC_010473.1"/>
</dbReference>
<dbReference type="SMR" id="B1XBN7"/>
<dbReference type="KEGG" id="ecd:ECDH10B_1403"/>
<dbReference type="HOGENOM" id="CLU_002333_7_3_6"/>
<dbReference type="GO" id="GO:0005829">
    <property type="term" value="C:cytosol"/>
    <property type="evidence" value="ECO:0007669"/>
    <property type="project" value="TreeGrafter"/>
</dbReference>
<dbReference type="GO" id="GO:0008859">
    <property type="term" value="F:exoribonuclease II activity"/>
    <property type="evidence" value="ECO:0007669"/>
    <property type="project" value="UniProtKB-UniRule"/>
</dbReference>
<dbReference type="GO" id="GO:0003723">
    <property type="term" value="F:RNA binding"/>
    <property type="evidence" value="ECO:0007669"/>
    <property type="project" value="UniProtKB-KW"/>
</dbReference>
<dbReference type="GO" id="GO:0006402">
    <property type="term" value="P:mRNA catabolic process"/>
    <property type="evidence" value="ECO:0007669"/>
    <property type="project" value="UniProtKB-UniRule"/>
</dbReference>
<dbReference type="FunFam" id="2.40.50.140:FF:000079">
    <property type="entry name" value="Exoribonuclease 2"/>
    <property type="match status" value="1"/>
</dbReference>
<dbReference type="FunFam" id="2.40.50.140:FF:000081">
    <property type="entry name" value="Exoribonuclease 2"/>
    <property type="match status" value="1"/>
</dbReference>
<dbReference type="FunFam" id="2.40.50.640:FF:000001">
    <property type="entry name" value="Exoribonuclease 2"/>
    <property type="match status" value="1"/>
</dbReference>
<dbReference type="Gene3D" id="2.40.50.640">
    <property type="match status" value="1"/>
</dbReference>
<dbReference type="Gene3D" id="2.40.50.140">
    <property type="entry name" value="Nucleic acid-binding proteins"/>
    <property type="match status" value="2"/>
</dbReference>
<dbReference type="HAMAP" id="MF_01036">
    <property type="entry name" value="RNase_II"/>
    <property type="match status" value="1"/>
</dbReference>
<dbReference type="InterPro" id="IPR011129">
    <property type="entry name" value="CSD"/>
</dbReference>
<dbReference type="InterPro" id="IPR012340">
    <property type="entry name" value="NA-bd_OB-fold"/>
</dbReference>
<dbReference type="InterPro" id="IPR013223">
    <property type="entry name" value="RNase_B_OB_dom"/>
</dbReference>
<dbReference type="InterPro" id="IPR011804">
    <property type="entry name" value="RNase_II"/>
</dbReference>
<dbReference type="InterPro" id="IPR001900">
    <property type="entry name" value="RNase_II/R"/>
</dbReference>
<dbReference type="InterPro" id="IPR022966">
    <property type="entry name" value="RNase_II/R_CS"/>
</dbReference>
<dbReference type="InterPro" id="IPR004476">
    <property type="entry name" value="RNase_II/RNase_R"/>
</dbReference>
<dbReference type="InterPro" id="IPR050180">
    <property type="entry name" value="RNR_Ribonuclease"/>
</dbReference>
<dbReference type="InterPro" id="IPR003029">
    <property type="entry name" value="S1_domain"/>
</dbReference>
<dbReference type="NCBIfam" id="TIGR00358">
    <property type="entry name" value="3_prime_RNase"/>
    <property type="match status" value="1"/>
</dbReference>
<dbReference type="NCBIfam" id="NF003455">
    <property type="entry name" value="PRK05054.1"/>
    <property type="match status" value="1"/>
</dbReference>
<dbReference type="NCBIfam" id="TIGR02062">
    <property type="entry name" value="RNase_B"/>
    <property type="match status" value="1"/>
</dbReference>
<dbReference type="PANTHER" id="PTHR23355:SF37">
    <property type="entry name" value="EXORIBONUCLEASE 2"/>
    <property type="match status" value="1"/>
</dbReference>
<dbReference type="PANTHER" id="PTHR23355">
    <property type="entry name" value="RIBONUCLEASE"/>
    <property type="match status" value="1"/>
</dbReference>
<dbReference type="Pfam" id="PF08206">
    <property type="entry name" value="OB_RNB"/>
    <property type="match status" value="1"/>
</dbReference>
<dbReference type="Pfam" id="PF00773">
    <property type="entry name" value="RNB"/>
    <property type="match status" value="1"/>
</dbReference>
<dbReference type="Pfam" id="PF00575">
    <property type="entry name" value="S1"/>
    <property type="match status" value="1"/>
</dbReference>
<dbReference type="SMART" id="SM00357">
    <property type="entry name" value="CSP"/>
    <property type="match status" value="1"/>
</dbReference>
<dbReference type="SMART" id="SM00955">
    <property type="entry name" value="RNB"/>
    <property type="match status" value="1"/>
</dbReference>
<dbReference type="SUPFAM" id="SSF50249">
    <property type="entry name" value="Nucleic acid-binding proteins"/>
    <property type="match status" value="4"/>
</dbReference>
<dbReference type="PROSITE" id="PS01175">
    <property type="entry name" value="RIBONUCLEASE_II"/>
    <property type="match status" value="1"/>
</dbReference>
<evidence type="ECO:0000255" key="1"/>
<evidence type="ECO:0000255" key="2">
    <source>
        <dbReference type="HAMAP-Rule" id="MF_01036"/>
    </source>
</evidence>
<accession>B1XBN7</accession>
<feature type="chain" id="PRO_1000135865" description="Exoribonuclease 2">
    <location>
        <begin position="1"/>
        <end position="644"/>
    </location>
</feature>
<feature type="domain" description="RNB" evidence="1">
    <location>
        <begin position="189"/>
        <end position="516"/>
    </location>
</feature>
<feature type="domain" description="S1 motif" evidence="2">
    <location>
        <begin position="561"/>
        <end position="643"/>
    </location>
</feature>
<keyword id="KW-0963">Cytoplasm</keyword>
<keyword id="KW-0269">Exonuclease</keyword>
<keyword id="KW-0378">Hydrolase</keyword>
<keyword id="KW-0540">Nuclease</keyword>
<keyword id="KW-0694">RNA-binding</keyword>
<gene>
    <name evidence="2" type="primary">rnb</name>
    <name type="ordered locus">ECDH10B_1403</name>
</gene>
<proteinExistence type="inferred from homology"/>
<sequence>MFQDNPLLAQLKQQLHSQTPRAEGVVKATEKGFGFLEVDAQKSYFIPPPQMKKVMHGDRIIAVIHSEKERESAEPEELVEPFLTRFVGKVQGKNDRLAIVPDHPLLKDAIPCRAARGLNHEFKEGDWAVAEMRRHPLKGDRSFYAELTQYITFGDDHFVPWWVTLARHNLEKEAPDGVATEMLDEGLVREDLTALDFVTIDSASTEDMDDALFAKALPDDKLQLIVAIADPTAWIAEGSKLDKAAKIRAFTNYLPGFNIPMLPRELSDDLCSLRANEVRPVLACRMTLSADGTIEDNIEFFAATIESKAKLVYDQVSDWLENTGDWQPESEAIAEQVRLLAQICQRRGEWRHNHALVFKDRPDYRFILGEKGEVLDIVAEPRRIANRIVEEAMIAANICAARVLRDKLGFGIYNVHMGFDPANADALAALLKTHGLHVDAEEVLTLDGFCKLRRELDAQPTGFLDSRIRRFQSFAEISTEPGPHFGLGLEAYATWTSPIRKYGDMINHRLLKAVIKGETATRPQDEITVQMAERRRLNRMAERDVGDWLYARFLKDKAGTDTRFAAEIVDISRGGMRVRLVDNGAIAFIPAPFLHAVRDELVCSQENGTVQIKGETVYKVTDVIDVTIAEVRMETRSIIARPVA</sequence>
<comment type="function">
    <text evidence="2">Involved in mRNA degradation. Hydrolyzes single-stranded polyribonucleotides processively in the 3' to 5' direction.</text>
</comment>
<comment type="catalytic activity">
    <reaction evidence="2">
        <text>Exonucleolytic cleavage in the 3'- to 5'-direction to yield nucleoside 5'-phosphates.</text>
        <dbReference type="EC" id="3.1.13.1"/>
    </reaction>
</comment>
<comment type="subcellular location">
    <subcellularLocation>
        <location evidence="2">Cytoplasm</location>
    </subcellularLocation>
</comment>
<comment type="similarity">
    <text evidence="2">Belongs to the RNR ribonuclease family. RNase II subfamily.</text>
</comment>
<name>RNB_ECODH</name>
<reference key="1">
    <citation type="journal article" date="2008" name="J. Bacteriol.">
        <title>The complete genome sequence of Escherichia coli DH10B: insights into the biology of a laboratory workhorse.</title>
        <authorList>
            <person name="Durfee T."/>
            <person name="Nelson R."/>
            <person name="Baldwin S."/>
            <person name="Plunkett G. III"/>
            <person name="Burland V."/>
            <person name="Mau B."/>
            <person name="Petrosino J.F."/>
            <person name="Qin X."/>
            <person name="Muzny D.M."/>
            <person name="Ayele M."/>
            <person name="Gibbs R.A."/>
            <person name="Csorgo B."/>
            <person name="Posfai G."/>
            <person name="Weinstock G.M."/>
            <person name="Blattner F.R."/>
        </authorList>
    </citation>
    <scope>NUCLEOTIDE SEQUENCE [LARGE SCALE GENOMIC DNA]</scope>
    <source>
        <strain>K12 / DH10B</strain>
    </source>
</reference>
<protein>
    <recommendedName>
        <fullName evidence="2">Exoribonuclease 2</fullName>
        <ecNumber evidence="2">3.1.13.1</ecNumber>
    </recommendedName>
    <alternativeName>
        <fullName evidence="2">Exoribonuclease II</fullName>
        <shortName evidence="2">RNase II</shortName>
        <shortName evidence="2">Ribonuclease II</shortName>
    </alternativeName>
</protein>